<protein>
    <recommendedName>
        <fullName evidence="1">DNA repair and recombination protein RadA</fullName>
    </recommendedName>
</protein>
<accession>A6VGG2</accession>
<organism>
    <name type="scientific">Methanococcus maripaludis (strain C7 / ATCC BAA-1331)</name>
    <dbReference type="NCBI Taxonomy" id="426368"/>
    <lineage>
        <taxon>Archaea</taxon>
        <taxon>Methanobacteriati</taxon>
        <taxon>Methanobacteriota</taxon>
        <taxon>Methanomada group</taxon>
        <taxon>Methanococci</taxon>
        <taxon>Methanococcales</taxon>
        <taxon>Methanococcaceae</taxon>
        <taxon>Methanococcus</taxon>
    </lineage>
</organism>
<keyword id="KW-0067">ATP-binding</keyword>
<keyword id="KW-0227">DNA damage</keyword>
<keyword id="KW-0233">DNA recombination</keyword>
<keyword id="KW-0238">DNA-binding</keyword>
<keyword id="KW-0547">Nucleotide-binding</keyword>
<proteinExistence type="inferred from homology"/>
<reference key="1">
    <citation type="submission" date="2007-06" db="EMBL/GenBank/DDBJ databases">
        <title>Complete sequence of Methanococcus maripaludis C7.</title>
        <authorList>
            <consortium name="US DOE Joint Genome Institute"/>
            <person name="Copeland A."/>
            <person name="Lucas S."/>
            <person name="Lapidus A."/>
            <person name="Barry K."/>
            <person name="Glavina del Rio T."/>
            <person name="Dalin E."/>
            <person name="Tice H."/>
            <person name="Pitluck S."/>
            <person name="Clum A."/>
            <person name="Schmutz J."/>
            <person name="Larimer F."/>
            <person name="Land M."/>
            <person name="Hauser L."/>
            <person name="Kyrpides N."/>
            <person name="Anderson I."/>
            <person name="Sieprawska-Lupa M."/>
            <person name="Whitman W.B."/>
            <person name="Richardson P."/>
        </authorList>
    </citation>
    <scope>NUCLEOTIDE SEQUENCE [LARGE SCALE GENOMIC DNA]</scope>
    <source>
        <strain>C7 / ATCC BAA-1331</strain>
    </source>
</reference>
<comment type="function">
    <text evidence="1">Involved in DNA repair and in homologous recombination. Binds and assemble on single-stranded DNA to form a nucleoprotein filament. Hydrolyzes ATP in a ssDNA-dependent manner and promotes DNA strand exchange between homologous DNA molecules.</text>
</comment>
<comment type="similarity">
    <text evidence="1">Belongs to the eukaryotic RecA-like protein family.</text>
</comment>
<sequence>MADVLTELPGVGPSTAEKLIEAGYLDFMKIATATIGELTDIEGISEKAAAKMIMAARDLCDLGFKSGVELLRQRQSVWRLSTGSKELDTVLAGGLESQSVTEFAGMYGSGKTQIMHQSCVNLQIAGKIYADLEGVVEEELEHPKAVYIDTEGTFRPERVVQMAEGLGIDGQLVLDNTFVARAYNSDMQMLFAEKIEDLIKGGNNIKLVIIDSLTSTFRNEFTGRGKLAERQQKLGRHMATLNKLADLYNCIVLVTNQVAAKPDAFFGVAEQAIGGHVVGHAATFRFFLRKSKGDKRVAKLYDSPHLPDSEAVFRITEKGIMD</sequence>
<name>RADA_METM7</name>
<gene>
    <name evidence="1" type="primary">radA</name>
    <name type="ordered locus">MmarC7_0469</name>
</gene>
<evidence type="ECO:0000255" key="1">
    <source>
        <dbReference type="HAMAP-Rule" id="MF_00348"/>
    </source>
</evidence>
<dbReference type="EMBL" id="CP000745">
    <property type="protein sequence ID" value="ABR65538.1"/>
    <property type="molecule type" value="Genomic_DNA"/>
</dbReference>
<dbReference type="SMR" id="A6VGG2"/>
<dbReference type="STRING" id="426368.MmarC7_0469"/>
<dbReference type="KEGG" id="mmz:MmarC7_0469"/>
<dbReference type="eggNOG" id="arCOG00415">
    <property type="taxonomic scope" value="Archaea"/>
</dbReference>
<dbReference type="HOGENOM" id="CLU_041732_0_0_2"/>
<dbReference type="OrthoDB" id="31129at2157"/>
<dbReference type="GO" id="GO:0005524">
    <property type="term" value="F:ATP binding"/>
    <property type="evidence" value="ECO:0007669"/>
    <property type="project" value="UniProtKB-UniRule"/>
</dbReference>
<dbReference type="GO" id="GO:0016887">
    <property type="term" value="F:ATP hydrolysis activity"/>
    <property type="evidence" value="ECO:0007669"/>
    <property type="project" value="InterPro"/>
</dbReference>
<dbReference type="GO" id="GO:0140664">
    <property type="term" value="F:ATP-dependent DNA damage sensor activity"/>
    <property type="evidence" value="ECO:0007669"/>
    <property type="project" value="InterPro"/>
</dbReference>
<dbReference type="GO" id="GO:0003684">
    <property type="term" value="F:damaged DNA binding"/>
    <property type="evidence" value="ECO:0007669"/>
    <property type="project" value="UniProtKB-UniRule"/>
</dbReference>
<dbReference type="GO" id="GO:0006310">
    <property type="term" value="P:DNA recombination"/>
    <property type="evidence" value="ECO:0007669"/>
    <property type="project" value="UniProtKB-UniRule"/>
</dbReference>
<dbReference type="GO" id="GO:0006281">
    <property type="term" value="P:DNA repair"/>
    <property type="evidence" value="ECO:0007669"/>
    <property type="project" value="UniProtKB-UniRule"/>
</dbReference>
<dbReference type="CDD" id="cd19515">
    <property type="entry name" value="archRadA"/>
    <property type="match status" value="1"/>
</dbReference>
<dbReference type="Gene3D" id="1.10.150.20">
    <property type="entry name" value="5' to 3' exonuclease, C-terminal subdomain"/>
    <property type="match status" value="1"/>
</dbReference>
<dbReference type="Gene3D" id="3.40.50.300">
    <property type="entry name" value="P-loop containing nucleotide triphosphate hydrolases"/>
    <property type="match status" value="1"/>
</dbReference>
<dbReference type="HAMAP" id="MF_00348">
    <property type="entry name" value="RadA_arch"/>
    <property type="match status" value="1"/>
</dbReference>
<dbReference type="InterPro" id="IPR003593">
    <property type="entry name" value="AAA+_ATPase"/>
</dbReference>
<dbReference type="InterPro" id="IPR013632">
    <property type="entry name" value="DNA_recomb/repair_Rad51_C"/>
</dbReference>
<dbReference type="InterPro" id="IPR011938">
    <property type="entry name" value="DNA_recomb/repair_RadA"/>
</dbReference>
<dbReference type="InterPro" id="IPR016467">
    <property type="entry name" value="DNA_recomb/repair_RecA-like"/>
</dbReference>
<dbReference type="InterPro" id="IPR010995">
    <property type="entry name" value="DNA_repair_Rad51/TF_NusA_a-hlx"/>
</dbReference>
<dbReference type="InterPro" id="IPR003583">
    <property type="entry name" value="Hlx-hairpin-Hlx_DNA-bd_motif"/>
</dbReference>
<dbReference type="InterPro" id="IPR027417">
    <property type="entry name" value="P-loop_NTPase"/>
</dbReference>
<dbReference type="InterPro" id="IPR020588">
    <property type="entry name" value="RecA_ATP-bd"/>
</dbReference>
<dbReference type="InterPro" id="IPR020587">
    <property type="entry name" value="RecA_monomer-monomer_interface"/>
</dbReference>
<dbReference type="NCBIfam" id="NF003301">
    <property type="entry name" value="PRK04301.1"/>
    <property type="match status" value="1"/>
</dbReference>
<dbReference type="NCBIfam" id="TIGR02236">
    <property type="entry name" value="recomb_radA"/>
    <property type="match status" value="1"/>
</dbReference>
<dbReference type="PANTHER" id="PTHR22942:SF30">
    <property type="entry name" value="MEIOTIC RECOMBINATION PROTEIN DMC1_LIM15 HOMOLOG"/>
    <property type="match status" value="1"/>
</dbReference>
<dbReference type="PANTHER" id="PTHR22942">
    <property type="entry name" value="RECA/RAD51/RADA DNA STRAND-PAIRING FAMILY MEMBER"/>
    <property type="match status" value="1"/>
</dbReference>
<dbReference type="Pfam" id="PF14520">
    <property type="entry name" value="HHH_5"/>
    <property type="match status" value="1"/>
</dbReference>
<dbReference type="Pfam" id="PF08423">
    <property type="entry name" value="Rad51"/>
    <property type="match status" value="1"/>
</dbReference>
<dbReference type="PIRSF" id="PIRSF005856">
    <property type="entry name" value="Rad51"/>
    <property type="match status" value="1"/>
</dbReference>
<dbReference type="SMART" id="SM00382">
    <property type="entry name" value="AAA"/>
    <property type="match status" value="1"/>
</dbReference>
<dbReference type="SMART" id="SM00278">
    <property type="entry name" value="HhH1"/>
    <property type="match status" value="2"/>
</dbReference>
<dbReference type="SUPFAM" id="SSF52540">
    <property type="entry name" value="P-loop containing nucleoside triphosphate hydrolases"/>
    <property type="match status" value="1"/>
</dbReference>
<dbReference type="SUPFAM" id="SSF47794">
    <property type="entry name" value="Rad51 N-terminal domain-like"/>
    <property type="match status" value="1"/>
</dbReference>
<dbReference type="PROSITE" id="PS50162">
    <property type="entry name" value="RECA_2"/>
    <property type="match status" value="1"/>
</dbReference>
<dbReference type="PROSITE" id="PS50163">
    <property type="entry name" value="RECA_3"/>
    <property type="match status" value="1"/>
</dbReference>
<feature type="chain" id="PRO_1000048388" description="DNA repair and recombination protein RadA">
    <location>
        <begin position="1"/>
        <end position="322"/>
    </location>
</feature>
<feature type="binding site" evidence="1">
    <location>
        <begin position="105"/>
        <end position="112"/>
    </location>
    <ligand>
        <name>ATP</name>
        <dbReference type="ChEBI" id="CHEBI:30616"/>
    </ligand>
</feature>